<keyword id="KW-1185">Reference proteome</keyword>
<gene>
    <name evidence="1" type="primary">terb2</name>
    <name evidence="2" type="ORF">zgc:111992</name>
</gene>
<accession>Q5BJD2</accession>
<dbReference type="EMBL" id="BC091528">
    <property type="protein sequence ID" value="AAH91528.1"/>
    <property type="molecule type" value="mRNA"/>
</dbReference>
<dbReference type="RefSeq" id="NP_001013486.1">
    <property type="nucleotide sequence ID" value="NM_001013468.1"/>
</dbReference>
<dbReference type="SMR" id="Q5BJD2"/>
<dbReference type="FunCoup" id="Q5BJD2">
    <property type="interactions" value="1064"/>
</dbReference>
<dbReference type="STRING" id="7955.ENSDARP00000057676"/>
<dbReference type="PaxDb" id="7955-ENSDARP00000057676"/>
<dbReference type="DNASU" id="541341"/>
<dbReference type="GeneID" id="541341"/>
<dbReference type="KEGG" id="dre:541341"/>
<dbReference type="AGR" id="ZFIN:ZDB-GENE-050320-30"/>
<dbReference type="CTD" id="145645"/>
<dbReference type="ZFIN" id="ZDB-GENE-050320-30">
    <property type="gene designation" value="terb2"/>
</dbReference>
<dbReference type="eggNOG" id="ENOG502S1BT">
    <property type="taxonomic scope" value="Eukaryota"/>
</dbReference>
<dbReference type="InParanoid" id="Q5BJD2"/>
<dbReference type="OrthoDB" id="5278943at2759"/>
<dbReference type="PhylomeDB" id="Q5BJD2"/>
<dbReference type="PRO" id="PR:Q5BJD2"/>
<dbReference type="Proteomes" id="UP000000437">
    <property type="component" value="Chromosome 7"/>
</dbReference>
<dbReference type="GO" id="GO:0000781">
    <property type="term" value="C:chromosome, telomeric region"/>
    <property type="evidence" value="ECO:0000250"/>
    <property type="project" value="UniProtKB"/>
</dbReference>
<dbReference type="GO" id="GO:0005637">
    <property type="term" value="C:nuclear inner membrane"/>
    <property type="evidence" value="ECO:0000250"/>
    <property type="project" value="UniProtKB"/>
</dbReference>
<dbReference type="GO" id="GO:0007129">
    <property type="term" value="P:homologous chromosome pairing at meiosis"/>
    <property type="evidence" value="ECO:0000250"/>
    <property type="project" value="UniProtKB"/>
</dbReference>
<dbReference type="GO" id="GO:0070197">
    <property type="term" value="P:meiotic attachment of telomere to nuclear envelope"/>
    <property type="evidence" value="ECO:0000250"/>
    <property type="project" value="UniProtKB"/>
</dbReference>
<dbReference type="GO" id="GO:0045141">
    <property type="term" value="P:meiotic telomere clustering"/>
    <property type="evidence" value="ECO:0000250"/>
    <property type="project" value="UniProtKB"/>
</dbReference>
<dbReference type="InterPro" id="IPR028065">
    <property type="entry name" value="TERB2"/>
</dbReference>
<dbReference type="PANTHER" id="PTHR35345">
    <property type="entry name" value="TELOMERE REPEATS-BINDING BOUQUET FORMATION PROTEIN 2"/>
    <property type="match status" value="1"/>
</dbReference>
<dbReference type="PANTHER" id="PTHR35345:SF1">
    <property type="entry name" value="TELOMERE REPEATS-BINDING BOUQUET FORMATION PROTEIN 2"/>
    <property type="match status" value="1"/>
</dbReference>
<dbReference type="Pfam" id="PF15101">
    <property type="entry name" value="TERB2"/>
    <property type="match status" value="1"/>
</dbReference>
<feature type="chain" id="PRO_0000263719" description="Telomere repeats-binding bouquet formation protein 2">
    <location>
        <begin position="1"/>
        <end position="212"/>
    </location>
</feature>
<evidence type="ECO:0000250" key="1">
    <source>
        <dbReference type="UniProtKB" id="Q9D494"/>
    </source>
</evidence>
<evidence type="ECO:0000303" key="2">
    <source ref="1"/>
</evidence>
<evidence type="ECO:0000305" key="3"/>
<name>TERB2_DANRE</name>
<comment type="function">
    <text evidence="1">Meiosis-specific telomere-associated protein involved in meiotic telomere attachment to the nucleus inner membrane, a crucial step for homologous pairing and synapsis. Component of the MAJIN-TERB1-TERB2 complex, which promotes telomere cap exchange by mediating attachment of telomeric DNA to the inner nuclear membrane and replacement of the protective cap of telomeric chromosomes: in early meiosis, the MAJIN-TERB1-TERB2 complex associates with telomeric DNA and the shelterin/telosome complex. During prophase, the complex matures and promotes release of the shelterin/telosome complex from telomeric DNA.</text>
</comment>
<comment type="subunit">
    <text evidence="1">Component of the MAJIN-TERB1-TERB2 complex.</text>
</comment>
<comment type="similarity">
    <text evidence="3">Belongs to the TERB2 family.</text>
</comment>
<organism>
    <name type="scientific">Danio rerio</name>
    <name type="common">Zebrafish</name>
    <name type="synonym">Brachydanio rerio</name>
    <dbReference type="NCBI Taxonomy" id="7955"/>
    <lineage>
        <taxon>Eukaryota</taxon>
        <taxon>Metazoa</taxon>
        <taxon>Chordata</taxon>
        <taxon>Craniata</taxon>
        <taxon>Vertebrata</taxon>
        <taxon>Euteleostomi</taxon>
        <taxon>Actinopterygii</taxon>
        <taxon>Neopterygii</taxon>
        <taxon>Teleostei</taxon>
        <taxon>Ostariophysi</taxon>
        <taxon>Cypriniformes</taxon>
        <taxon>Danionidae</taxon>
        <taxon>Danioninae</taxon>
        <taxon>Danio</taxon>
    </lineage>
</organism>
<sequence length="212" mass="24285">MFKRKTAWFSDSVEKEVISFWVSEGGDISSWKTAGYLFSDDASSEDTKRIYGSEDYVKNRATVFHSSFLLACQPRQSVTSVPIGHYVLPPDFVQNEMKAIIGRFIWEKDEQVICEEQINPEVPKDILSGETEDHALRERSSQDDYQTVTSQSKVCSCCEMRQYPVNNMISGYVHIDQMRKYSGELKDFLPSLHGHDVSRSNDPTPPFHRKAV</sequence>
<proteinExistence type="evidence at transcript level"/>
<reference key="1">
    <citation type="submission" date="2005-03" db="EMBL/GenBank/DDBJ databases">
        <authorList>
            <consortium name="NIH - Zebrafish Gene Collection (ZGC) project"/>
        </authorList>
    </citation>
    <scope>NUCLEOTIDE SEQUENCE [LARGE SCALE MRNA]</scope>
    <source>
        <tissue>Olfactory epithelium</tissue>
    </source>
</reference>
<protein>
    <recommendedName>
        <fullName evidence="1">Telomere repeats-binding bouquet formation protein 2</fullName>
    </recommendedName>
</protein>